<feature type="chain" id="PRO_0000064759" description="Ataxin-7">
    <location>
        <begin position="1"/>
        <end position="892"/>
    </location>
</feature>
<feature type="domain" description="SCA7" evidence="1">
    <location>
        <begin position="334"/>
        <end position="401"/>
    </location>
</feature>
<feature type="region of interest" description="Disordered" evidence="2">
    <location>
        <begin position="1"/>
        <end position="74"/>
    </location>
</feature>
<feature type="region of interest" description="Disordered" evidence="2">
    <location>
        <begin position="195"/>
        <end position="247"/>
    </location>
</feature>
<feature type="region of interest" description="Disordered" evidence="2">
    <location>
        <begin position="298"/>
        <end position="328"/>
    </location>
</feature>
<feature type="region of interest" description="Disordered" evidence="2">
    <location>
        <begin position="389"/>
        <end position="505"/>
    </location>
</feature>
<feature type="region of interest" description="Disordered" evidence="2">
    <location>
        <begin position="616"/>
        <end position="730"/>
    </location>
</feature>
<feature type="region of interest" description="Disordered" evidence="2">
    <location>
        <begin position="818"/>
        <end position="892"/>
    </location>
</feature>
<feature type="compositionally biased region" description="Basic and acidic residues" evidence="2">
    <location>
        <begin position="1"/>
        <end position="15"/>
    </location>
</feature>
<feature type="compositionally biased region" description="Low complexity" evidence="2">
    <location>
        <begin position="16"/>
        <end position="38"/>
    </location>
</feature>
<feature type="compositionally biased region" description="Pro residues" evidence="2">
    <location>
        <begin position="39"/>
        <end position="55"/>
    </location>
</feature>
<feature type="compositionally biased region" description="Low complexity" evidence="2">
    <location>
        <begin position="195"/>
        <end position="222"/>
    </location>
</feature>
<feature type="compositionally biased region" description="Basic and acidic residues" evidence="2">
    <location>
        <begin position="318"/>
        <end position="327"/>
    </location>
</feature>
<feature type="compositionally biased region" description="Basic and acidic residues" evidence="2">
    <location>
        <begin position="389"/>
        <end position="403"/>
    </location>
</feature>
<feature type="compositionally biased region" description="Pro residues" evidence="2">
    <location>
        <begin position="405"/>
        <end position="419"/>
    </location>
</feature>
<feature type="compositionally biased region" description="Pro residues" evidence="2">
    <location>
        <begin position="448"/>
        <end position="458"/>
    </location>
</feature>
<feature type="compositionally biased region" description="Pro residues" evidence="2">
    <location>
        <begin position="468"/>
        <end position="483"/>
    </location>
</feature>
<feature type="compositionally biased region" description="Acidic residues" evidence="2">
    <location>
        <begin position="493"/>
        <end position="502"/>
    </location>
</feature>
<feature type="compositionally biased region" description="Polar residues" evidence="2">
    <location>
        <begin position="616"/>
        <end position="629"/>
    </location>
</feature>
<feature type="compositionally biased region" description="Low complexity" evidence="2">
    <location>
        <begin position="640"/>
        <end position="669"/>
    </location>
</feature>
<feature type="compositionally biased region" description="Basic residues" evidence="2">
    <location>
        <begin position="670"/>
        <end position="680"/>
    </location>
</feature>
<feature type="compositionally biased region" description="Polar residues" evidence="2">
    <location>
        <begin position="685"/>
        <end position="695"/>
    </location>
</feature>
<feature type="compositionally biased region" description="Low complexity" evidence="2">
    <location>
        <begin position="716"/>
        <end position="730"/>
    </location>
</feature>
<feature type="compositionally biased region" description="Low complexity" evidence="2">
    <location>
        <begin position="840"/>
        <end position="851"/>
    </location>
</feature>
<feature type="site" description="Cleavage; by caspase-7" evidence="11">
    <location>
        <begin position="266"/>
        <end position="267"/>
    </location>
</feature>
<feature type="site" description="Cleavage; by caspase-7" evidence="11">
    <location>
        <begin position="344"/>
        <end position="345"/>
    </location>
</feature>
<feature type="cross-link" description="Glycyl lysine isopeptide (Lys-Gly) (interchain with G-Cter in SUMO); alternate" evidence="13">
    <location>
        <position position="257"/>
    </location>
</feature>
<feature type="cross-link" description="Glycyl lysine isopeptide (Lys-Gly) (interchain with G-Cter in SUMO2); alternate" evidence="23">
    <location>
        <position position="257"/>
    </location>
</feature>
<feature type="splice variant" id="VSP_044456" description="In isoform 3." evidence="19">
    <original>MSERAADDVRGEPRRAAAAAGGAAAAAARQQQQQQQQQQPPPPQPQRQQHPPPPPRRTRPEDGGPGAASTSAAAMATVGERRPLPSPEVMLGQSWNLWVEASKLPGKDGTELDESFKEFGKNREVMGLCREDMPIFGFCPAHDDFYLVVCNDCNQVVKPQAFQSHY</original>
    <variation>MEGSKTPLQSSPSAQELKAPL</variation>
    <location>
        <begin position="1"/>
        <end position="166"/>
    </location>
</feature>
<feature type="splice variant" id="VSP_007695" description="In isoform b." evidence="21">
    <original>PKARP</original>
    <variation>DISSPCLRTGISATSPQSPDLKSKGTSLTAENSTGRNNADTFEDKLHLHSALWTPRCL</variation>
    <location>
        <begin position="888"/>
        <end position="892"/>
    </location>
</feature>
<feature type="sequence variant" id="VAR_011823" description="In dbSNP:rs1053338." evidence="7 17">
    <original>K</original>
    <variation>R</variation>
    <location>
        <position position="264"/>
    </location>
</feature>
<feature type="sequence variant" id="VAR_053779" description="In dbSNP:rs3733124.">
    <original>I</original>
    <variation>V</variation>
    <location>
        <position position="573"/>
    </location>
</feature>
<feature type="sequence variant" id="VAR_011824" description="In dbSNP:rs1053340.">
    <original>P</original>
    <variation>S</variation>
    <location>
        <position position="663"/>
    </location>
</feature>
<feature type="sequence variant" id="VAR_020143" description="In dbSNP:rs3774729." evidence="7 17">
    <original>V</original>
    <variation>M</variation>
    <location>
        <position position="862"/>
    </location>
</feature>
<feature type="mutagenesis site" description="Almost completely abolishes sumoylation." evidence="13">
    <original>K</original>
    <variation>R</variation>
    <location>
        <position position="257"/>
    </location>
</feature>
<feature type="mutagenesis site" description="Abolished cleavage by caspase-7 and attenuates formation of protein aggregates in SCA7 degeneration; when associated with N-344." evidence="11">
    <original>D</original>
    <variation>N</variation>
    <location>
        <position position="266"/>
    </location>
</feature>
<feature type="mutagenesis site" description="Abolished cleavage by caspase-7 and attenuates formation of protein aggregates in SCA7 degeneration; when associated with N-266." evidence="11">
    <original>D</original>
    <variation>N</variation>
    <location>
        <position position="344"/>
    </location>
</feature>
<feature type="mutagenesis site" description="No effect on sumoylation." evidence="13">
    <original>K</original>
    <variation>R</variation>
    <location>
        <position position="858"/>
    </location>
</feature>
<feature type="sequence conflict" description="In Ref. 2; AAC19162." evidence="21" ref="2">
    <original>P</original>
    <variation>H</variation>
    <location>
        <position position="105"/>
    </location>
</feature>
<feature type="sequence conflict" description="In Ref. 2; AAC19162." evidence="21" ref="2">
    <original>C</original>
    <variation>S</variation>
    <location>
        <position position="129"/>
    </location>
</feature>
<feature type="sequence conflict" description="In Ref. 2; AAC39765/AAC19163." evidence="21" ref="2">
    <original>PKARP</original>
    <variation>VGNGL</variation>
    <location>
        <begin position="888"/>
        <end position="892"/>
    </location>
</feature>
<feature type="turn" evidence="24">
    <location>
        <begin position="343"/>
        <end position="345"/>
    </location>
</feature>
<feature type="turn" evidence="24">
    <location>
        <begin position="352"/>
        <end position="354"/>
    </location>
</feature>
<feature type="helix" evidence="24">
    <location>
        <begin position="369"/>
        <end position="374"/>
    </location>
</feature>
<feature type="strand" evidence="24">
    <location>
        <begin position="378"/>
        <end position="380"/>
    </location>
</feature>
<feature type="helix" evidence="24">
    <location>
        <begin position="382"/>
        <end position="393"/>
    </location>
</feature>
<feature type="strand" evidence="25">
    <location>
        <begin position="511"/>
        <end position="514"/>
    </location>
</feature>
<feature type="strand" evidence="25">
    <location>
        <begin position="530"/>
        <end position="532"/>
    </location>
</feature>
<feature type="strand" evidence="25">
    <location>
        <begin position="534"/>
        <end position="537"/>
    </location>
</feature>
<feature type="helix" evidence="25">
    <location>
        <begin position="541"/>
        <end position="557"/>
    </location>
</feature>
<protein>
    <recommendedName>
        <fullName evidence="18">Ataxin-7</fullName>
    </recommendedName>
    <alternativeName>
        <fullName evidence="20">Spinocerebellar ataxia type 7 protein</fullName>
    </alternativeName>
</protein>
<gene>
    <name type="primary">ATXN7</name>
    <name evidence="20" type="synonym">SCA7</name>
</gene>
<dbReference type="EMBL" id="AJ000517">
    <property type="protein sequence ID" value="CAA04154.1"/>
    <property type="molecule type" value="mRNA"/>
</dbReference>
<dbReference type="EMBL" id="AF032102">
    <property type="protein sequence ID" value="AAC19162.1"/>
    <property type="molecule type" value="Genomic_DNA"/>
</dbReference>
<dbReference type="EMBL" id="AF032103">
    <property type="protein sequence ID" value="AAC19163.1"/>
    <property type="molecule type" value="mRNA"/>
</dbReference>
<dbReference type="EMBL" id="AF032105">
    <property type="protein sequence ID" value="AAC39765.1"/>
    <property type="molecule type" value="mRNA"/>
</dbReference>
<dbReference type="EMBL" id="AK304062">
    <property type="protein sequence ID" value="BAG64969.1"/>
    <property type="molecule type" value="mRNA"/>
</dbReference>
<dbReference type="EMBL" id="AC012557">
    <property type="status" value="NOT_ANNOTATED_CDS"/>
    <property type="molecule type" value="Genomic_DNA"/>
</dbReference>
<dbReference type="EMBL" id="AC104162">
    <property type="status" value="NOT_ANNOTATED_CDS"/>
    <property type="molecule type" value="Genomic_DNA"/>
</dbReference>
<dbReference type="EMBL" id="AA398030">
    <property type="status" value="NOT_ANNOTATED_CDS"/>
    <property type="molecule type" value="mRNA"/>
</dbReference>
<dbReference type="CCDS" id="CCDS43102.1">
    <molecule id="O15265-1"/>
</dbReference>
<dbReference type="CCDS" id="CCDS46861.2">
    <molecule id="O15265-3"/>
</dbReference>
<dbReference type="CCDS" id="CCDS54603.1">
    <molecule id="O15265-2"/>
</dbReference>
<dbReference type="PIR" id="T09193">
    <property type="entry name" value="T09193"/>
</dbReference>
<dbReference type="RefSeq" id="NP_000324.1">
    <molecule id="O15265-1"/>
    <property type="nucleotide sequence ID" value="NM_000333.4"/>
</dbReference>
<dbReference type="RefSeq" id="NP_001121621.2">
    <molecule id="O15265-3"/>
    <property type="nucleotide sequence ID" value="NM_001128149.3"/>
</dbReference>
<dbReference type="RefSeq" id="NP_001170858.1">
    <molecule id="O15265-2"/>
    <property type="nucleotide sequence ID" value="NM_001177387.1"/>
</dbReference>
<dbReference type="RefSeq" id="NP_001364334.1">
    <molecule id="O15265-1"/>
    <property type="nucleotide sequence ID" value="NM_001377405.1"/>
</dbReference>
<dbReference type="RefSeq" id="NP_001364335.1">
    <molecule id="O15265-1"/>
    <property type="nucleotide sequence ID" value="NM_001377406.1"/>
</dbReference>
<dbReference type="PDB" id="2KKR">
    <property type="method" value="NMR"/>
    <property type="chains" value="A=330-401"/>
</dbReference>
<dbReference type="PDB" id="7KTR">
    <property type="method" value="EM"/>
    <property type="resolution" value="2.93 A"/>
    <property type="chains" value="N=1-892"/>
</dbReference>
<dbReference type="PDB" id="7KTS">
    <property type="method" value="EM"/>
    <property type="resolution" value="19.09 A"/>
    <property type="chains" value="N=1-892"/>
</dbReference>
<dbReference type="PDB" id="8H7G">
    <property type="method" value="EM"/>
    <property type="resolution" value="3.70 A"/>
    <property type="chains" value="L=1-892"/>
</dbReference>
<dbReference type="PDBsum" id="2KKR"/>
<dbReference type="PDBsum" id="7KTR"/>
<dbReference type="PDBsum" id="7KTS"/>
<dbReference type="PDBsum" id="8H7G"/>
<dbReference type="BMRB" id="O15265"/>
<dbReference type="EMDB" id="EMD-23027"/>
<dbReference type="EMDB" id="EMD-23028"/>
<dbReference type="EMDB" id="EMD-34520"/>
<dbReference type="SMR" id="O15265"/>
<dbReference type="BioGRID" id="112221">
    <property type="interactions" value="115"/>
</dbReference>
<dbReference type="ComplexPortal" id="CPX-6802">
    <property type="entry name" value="SAGA complex, KAT2B variant"/>
</dbReference>
<dbReference type="ComplexPortal" id="CPX-900">
    <property type="entry name" value="SAGA complex, KAT2A variant"/>
</dbReference>
<dbReference type="ComplexPortal" id="CPX-903">
    <property type="entry name" value="TFTC histone acetylation complex"/>
</dbReference>
<dbReference type="CORUM" id="O15265"/>
<dbReference type="FunCoup" id="O15265">
    <property type="interactions" value="2409"/>
</dbReference>
<dbReference type="IntAct" id="O15265">
    <property type="interactions" value="84"/>
</dbReference>
<dbReference type="MINT" id="O15265"/>
<dbReference type="STRING" id="9606.ENSP00000295900"/>
<dbReference type="GlyCosmos" id="O15265">
    <property type="glycosylation" value="1 site, 2 glycans"/>
</dbReference>
<dbReference type="GlyGen" id="O15265">
    <property type="glycosylation" value="3 sites, 2 O-linked glycans (1 site)"/>
</dbReference>
<dbReference type="iPTMnet" id="O15265"/>
<dbReference type="PhosphoSitePlus" id="O15265"/>
<dbReference type="SwissPalm" id="O15265"/>
<dbReference type="BioMuta" id="ATXN7"/>
<dbReference type="jPOST" id="O15265"/>
<dbReference type="MassIVE" id="O15265"/>
<dbReference type="PaxDb" id="9606-ENSP00000439585"/>
<dbReference type="PeptideAtlas" id="O15265"/>
<dbReference type="ProteomicsDB" id="20578"/>
<dbReference type="ProteomicsDB" id="48553">
    <molecule id="O15265-1"/>
</dbReference>
<dbReference type="ProteomicsDB" id="48554">
    <molecule id="O15265-2"/>
</dbReference>
<dbReference type="Pumba" id="O15265"/>
<dbReference type="TopDownProteomics" id="O15265-2">
    <molecule id="O15265-2"/>
</dbReference>
<dbReference type="Antibodypedia" id="7629">
    <property type="antibodies" value="162 antibodies from 32 providers"/>
</dbReference>
<dbReference type="DNASU" id="6314"/>
<dbReference type="Ensembl" id="ENST00000295900.10">
    <molecule id="O15265-1"/>
    <property type="protein sequence ID" value="ENSP00000295900.6"/>
    <property type="gene ID" value="ENSG00000163635.20"/>
</dbReference>
<dbReference type="Ensembl" id="ENST00000484332.1">
    <molecule id="O15265-3"/>
    <property type="protein sequence ID" value="ENSP00000428277.1"/>
    <property type="gene ID" value="ENSG00000163635.20"/>
</dbReference>
<dbReference type="Ensembl" id="ENST00000487717.5">
    <molecule id="O15265-1"/>
    <property type="protein sequence ID" value="ENSP00000420234.1"/>
    <property type="gene ID" value="ENSG00000163635.20"/>
</dbReference>
<dbReference type="Ensembl" id="ENST00000522345.2">
    <molecule id="O15265-2"/>
    <property type="protein sequence ID" value="ENSP00000428067.2"/>
    <property type="gene ID" value="ENSG00000163635.20"/>
</dbReference>
<dbReference type="Ensembl" id="ENST00000674280.1">
    <molecule id="O15265-1"/>
    <property type="protein sequence ID" value="ENSP00000501377.1"/>
    <property type="gene ID" value="ENSG00000163635.20"/>
</dbReference>
<dbReference type="GeneID" id="6314"/>
<dbReference type="KEGG" id="hsa:6314"/>
<dbReference type="MANE-Select" id="ENST00000674280.1">
    <property type="protein sequence ID" value="ENSP00000501377.1"/>
    <property type="RefSeq nucleotide sequence ID" value="NM_001377405.1"/>
    <property type="RefSeq protein sequence ID" value="NP_001364334.1"/>
</dbReference>
<dbReference type="UCSC" id="uc003dlw.5">
    <molecule id="O15265-1"/>
    <property type="organism name" value="human"/>
</dbReference>
<dbReference type="AGR" id="HGNC:10560"/>
<dbReference type="CTD" id="6314"/>
<dbReference type="DisGeNET" id="6314"/>
<dbReference type="GeneCards" id="ATXN7"/>
<dbReference type="GeneReviews" id="ATXN7"/>
<dbReference type="HGNC" id="HGNC:10560">
    <property type="gene designation" value="ATXN7"/>
</dbReference>
<dbReference type="HPA" id="ENSG00000163635">
    <property type="expression patterns" value="Low tissue specificity"/>
</dbReference>
<dbReference type="MalaCards" id="ATXN7"/>
<dbReference type="MIM" id="164500">
    <property type="type" value="phenotype"/>
</dbReference>
<dbReference type="MIM" id="607640">
    <property type="type" value="gene"/>
</dbReference>
<dbReference type="neXtProt" id="NX_O15265"/>
<dbReference type="OpenTargets" id="ENSG00000163635"/>
<dbReference type="Orphanet" id="94147">
    <property type="disease" value="Spinocerebellar ataxia type 7"/>
</dbReference>
<dbReference type="PharmGKB" id="PA34973"/>
<dbReference type="VEuPathDB" id="HostDB:ENSG00000163635"/>
<dbReference type="eggNOG" id="KOG4140">
    <property type="taxonomic scope" value="Eukaryota"/>
</dbReference>
<dbReference type="GeneTree" id="ENSGT00940000157279"/>
<dbReference type="HOGENOM" id="CLU_014451_1_0_1"/>
<dbReference type="InParanoid" id="O15265"/>
<dbReference type="OMA" id="NNVHTKH"/>
<dbReference type="OrthoDB" id="21678at2759"/>
<dbReference type="PAN-GO" id="O15265">
    <property type="GO annotations" value="0 GO annotations based on evolutionary models"/>
</dbReference>
<dbReference type="PhylomeDB" id="O15265"/>
<dbReference type="TreeFam" id="TF331337"/>
<dbReference type="PathwayCommons" id="O15265"/>
<dbReference type="Reactome" id="R-HSA-3214847">
    <property type="pathway name" value="HATs acetylate histones"/>
</dbReference>
<dbReference type="Reactome" id="R-HSA-5689880">
    <property type="pathway name" value="Ub-specific processing proteases"/>
</dbReference>
<dbReference type="SignaLink" id="O15265"/>
<dbReference type="SIGNOR" id="O15265"/>
<dbReference type="BioGRID-ORCS" id="6314">
    <property type="hits" value="25 hits in 1170 CRISPR screens"/>
</dbReference>
<dbReference type="ChiTaRS" id="ATXN7">
    <property type="organism name" value="human"/>
</dbReference>
<dbReference type="EvolutionaryTrace" id="O15265"/>
<dbReference type="GenomeRNAi" id="6314"/>
<dbReference type="Pharos" id="O15265">
    <property type="development level" value="Tbio"/>
</dbReference>
<dbReference type="PRO" id="PR:O15265"/>
<dbReference type="Proteomes" id="UP000005640">
    <property type="component" value="Chromosome 3"/>
</dbReference>
<dbReference type="RNAct" id="O15265">
    <property type="molecule type" value="protein"/>
</dbReference>
<dbReference type="Bgee" id="ENSG00000163635">
    <property type="expression patterns" value="Expressed in mucosa of paranasal sinus and 206 other cell types or tissues"/>
</dbReference>
<dbReference type="ExpressionAtlas" id="O15265">
    <property type="expression patterns" value="baseline and differential"/>
</dbReference>
<dbReference type="GO" id="GO:0005829">
    <property type="term" value="C:cytosol"/>
    <property type="evidence" value="ECO:0000314"/>
    <property type="project" value="HPA"/>
</dbReference>
<dbReference type="GO" id="GO:0015630">
    <property type="term" value="C:microtubule cytoskeleton"/>
    <property type="evidence" value="ECO:0000314"/>
    <property type="project" value="UniProtKB"/>
</dbReference>
<dbReference type="GO" id="GO:0016363">
    <property type="term" value="C:nuclear matrix"/>
    <property type="evidence" value="ECO:0007669"/>
    <property type="project" value="UniProtKB-SubCell"/>
</dbReference>
<dbReference type="GO" id="GO:0005730">
    <property type="term" value="C:nucleolus"/>
    <property type="evidence" value="ECO:0007669"/>
    <property type="project" value="UniProtKB-SubCell"/>
</dbReference>
<dbReference type="GO" id="GO:0005654">
    <property type="term" value="C:nucleoplasm"/>
    <property type="evidence" value="ECO:0000314"/>
    <property type="project" value="HPA"/>
</dbReference>
<dbReference type="GO" id="GO:0005634">
    <property type="term" value="C:nucleus"/>
    <property type="evidence" value="ECO:0000314"/>
    <property type="project" value="UniProtKB"/>
</dbReference>
<dbReference type="GO" id="GO:0000124">
    <property type="term" value="C:SAGA complex"/>
    <property type="evidence" value="ECO:0000303"/>
    <property type="project" value="ComplexPortal"/>
</dbReference>
<dbReference type="GO" id="GO:0033276">
    <property type="term" value="C:transcription factor TFTC complex"/>
    <property type="evidence" value="ECO:0000303"/>
    <property type="project" value="ComplexPortal"/>
</dbReference>
<dbReference type="GO" id="GO:0000226">
    <property type="term" value="P:microtubule cytoskeleton organization"/>
    <property type="evidence" value="ECO:0000315"/>
    <property type="project" value="UniProtKB"/>
</dbReference>
<dbReference type="GO" id="GO:0007026">
    <property type="term" value="P:negative regulation of microtubule depolymerization"/>
    <property type="evidence" value="ECO:0000315"/>
    <property type="project" value="CACAO"/>
</dbReference>
<dbReference type="GO" id="GO:0006997">
    <property type="term" value="P:nucleus organization"/>
    <property type="evidence" value="ECO:0000304"/>
    <property type="project" value="ProtInc"/>
</dbReference>
<dbReference type="GO" id="GO:0045893">
    <property type="term" value="P:positive regulation of DNA-templated transcription"/>
    <property type="evidence" value="ECO:0000303"/>
    <property type="project" value="ComplexPortal"/>
</dbReference>
<dbReference type="GO" id="GO:0006282">
    <property type="term" value="P:regulation of DNA repair"/>
    <property type="evidence" value="ECO:0000303"/>
    <property type="project" value="ComplexPortal"/>
</dbReference>
<dbReference type="GO" id="GO:0043484">
    <property type="term" value="P:regulation of RNA splicing"/>
    <property type="evidence" value="ECO:0000303"/>
    <property type="project" value="ComplexPortal"/>
</dbReference>
<dbReference type="GO" id="GO:0006357">
    <property type="term" value="P:regulation of transcription by RNA polymerase II"/>
    <property type="evidence" value="ECO:0000314"/>
    <property type="project" value="ComplexPortal"/>
</dbReference>
<dbReference type="GO" id="GO:0007601">
    <property type="term" value="P:visual perception"/>
    <property type="evidence" value="ECO:0000304"/>
    <property type="project" value="ProtInc"/>
</dbReference>
<dbReference type="Gene3D" id="6.10.140.670">
    <property type="match status" value="1"/>
</dbReference>
<dbReference type="InterPro" id="IPR052237">
    <property type="entry name" value="Ataxin-7-like_regulator"/>
</dbReference>
<dbReference type="InterPro" id="IPR013243">
    <property type="entry name" value="SCA7_dom"/>
</dbReference>
<dbReference type="PANTHER" id="PTHR15117">
    <property type="entry name" value="ATAXIN 7 RELATED"/>
    <property type="match status" value="1"/>
</dbReference>
<dbReference type="PANTHER" id="PTHR15117:SF2">
    <property type="entry name" value="ATAXIN-7"/>
    <property type="match status" value="1"/>
</dbReference>
<dbReference type="Pfam" id="PF08313">
    <property type="entry name" value="SCA7"/>
    <property type="match status" value="1"/>
</dbReference>
<dbReference type="PROSITE" id="PS51505">
    <property type="entry name" value="SCA7"/>
    <property type="match status" value="1"/>
</dbReference>
<evidence type="ECO:0000255" key="1">
    <source>
        <dbReference type="PROSITE-ProRule" id="PRU00838"/>
    </source>
</evidence>
<evidence type="ECO:0000256" key="2">
    <source>
        <dbReference type="SAM" id="MobiDB-lite"/>
    </source>
</evidence>
<evidence type="ECO:0000269" key="3">
    <source>
    </source>
</evidence>
<evidence type="ECO:0000269" key="4">
    <source>
    </source>
</evidence>
<evidence type="ECO:0000269" key="5">
    <source>
    </source>
</evidence>
<evidence type="ECO:0000269" key="6">
    <source>
    </source>
</evidence>
<evidence type="ECO:0000269" key="7">
    <source>
    </source>
</evidence>
<evidence type="ECO:0000269" key="8">
    <source>
    </source>
</evidence>
<evidence type="ECO:0000269" key="9">
    <source>
    </source>
</evidence>
<evidence type="ECO:0000269" key="10">
    <source>
    </source>
</evidence>
<evidence type="ECO:0000269" key="11">
    <source>
    </source>
</evidence>
<evidence type="ECO:0000269" key="12">
    <source>
    </source>
</evidence>
<evidence type="ECO:0000269" key="13">
    <source>
    </source>
</evidence>
<evidence type="ECO:0000269" key="14">
    <source>
    </source>
</evidence>
<evidence type="ECO:0000269" key="15">
    <source>
    </source>
</evidence>
<evidence type="ECO:0000269" key="16">
    <source>
    </source>
</evidence>
<evidence type="ECO:0000269" key="17">
    <source>
    </source>
</evidence>
<evidence type="ECO:0000303" key="18">
    <source>
    </source>
</evidence>
<evidence type="ECO:0000303" key="19">
    <source>
    </source>
</evidence>
<evidence type="ECO:0000303" key="20">
    <source>
    </source>
</evidence>
<evidence type="ECO:0000305" key="21"/>
<evidence type="ECO:0000312" key="22">
    <source>
        <dbReference type="Proteomes" id="UP000005640"/>
    </source>
</evidence>
<evidence type="ECO:0007744" key="23">
    <source>
    </source>
</evidence>
<evidence type="ECO:0007829" key="24">
    <source>
        <dbReference type="PDB" id="2KKR"/>
    </source>
</evidence>
<evidence type="ECO:0007829" key="25">
    <source>
        <dbReference type="PDB" id="7KTR"/>
    </source>
</evidence>
<proteinExistence type="evidence at protein level"/>
<sequence>MSERAADDVRGEPRRAAAAAGGAAAAAARQQQQQQQQQQPPPPQPQRQQHPPPPPRRTRPEDGGPGAASTSAAAMATVGERRPLPSPEVMLGQSWNLWVEASKLPGKDGTELDESFKEFGKNREVMGLCREDMPIFGFCPAHDDFYLVVCNDCNQVVKPQAFQSHYERRHSSSSKPPLAVPPTSVFSFFPSLSKSKGGSASGSNRSSSGGVLSASSSSSKLLKSPKEKLQLRGNTRPMHPIQQSRVPHGRIMTPSVKVEKIHPKMDGTLLKSAVGPTCPATVSSLVKPGLNCPSIPKPTLPSPGQILNGKGLPAPPTLEKKPEDNSNNRKFLNKRLSEREFDPDIHCGVIDLDTKKPCTRSLTCKTHSLTQRRAVQGRRKRFDVLLAEHKNKTREKELIRHPDSQQPPQPLRDPHPAPPRTSQEPHQNPHGVIPSESKPFVASKPKPHTPSLPRPPGCPAQQGGSAPIDPPPVHESPHPPLPATEPASRLSSEEGEGDDKEESVEKLDCHYSGHHPQPASFCTFGSRQIGRGYYVFDSRWNRLRCALNLMVEKHLNAQLWKKIPPVPSTTSPISTRIPHRTNSVPTSQCGVSYLAAATVSTSPVLLSSTCISPNSKSVPAHGTTLNAQPAASGAMDPVCSMQSRQVSSSSSSPSTPSGLSSVPSSPMSRKPQKLKSSKSLRPKESSGNSTNCQNASSSTSGGSGKKRKNSSPLLVHSSSSSSSSSSSSHSMESFRKNCVAHSGPPYPSTVTSSHSIGLNCVTNKANAVNVRHDQSGRGPPTGSPAESIKRMSVMVNSSDSTLSLGPFIHQSNELPVNSHGSFSHSHTPLDKLIGKKRKCSPSSSSINNSSSKPTKVAKVPAVNNVHMKHTGTIPGAQGLMNSSLLHQPKARP</sequence>
<reference key="1">
    <citation type="journal article" date="1997" name="Nat. Genet.">
        <title>Cloning of the SCA7 gene reveals a highly unstable CAG repeat expansion.</title>
        <authorList>
            <person name="David G."/>
            <person name="Abbas N."/>
            <person name="Stevanin G."/>
            <person name="Duerr A."/>
            <person name="Yvert G."/>
            <person name="Cancel G."/>
            <person name="Weber C."/>
            <person name="Imbert G."/>
            <person name="Saudou F."/>
            <person name="Antoniou E."/>
            <person name="Drabkin H."/>
            <person name="Gemmill R."/>
            <person name="Giunti P."/>
            <person name="Benomar A."/>
            <person name="Wood N."/>
            <person name="Ruberg M."/>
            <person name="Agid Y."/>
            <person name="Mandel J.-L."/>
            <person name="Brice A."/>
        </authorList>
    </citation>
    <scope>NUCLEOTIDE SEQUENCE [MRNA] (ISOFORM A)</scope>
    <scope>FUNCTION</scope>
    <scope>INVOLVEMENT IN SCA7</scope>
    <scope>POLYMORPHISM</scope>
    <source>
        <tissue>Lymphoblast</tissue>
    </source>
</reference>
<reference key="2">
    <citation type="journal article" date="1998" name="Hum. Mol. Genet.">
        <title>Molecular genetic analysis of autosomal dominant cerebellar ataxia with retinal degeneration (ADCA type II) caused by CAG triplet repeat expansion.</title>
        <authorList>
            <person name="Del-Favero J."/>
            <person name="Krols L."/>
            <person name="Michalik A."/>
            <person name="Theuns J."/>
            <person name="Loefgren A."/>
            <person name="Goossens D."/>
            <person name="Wehnert A."/>
            <person name="Van den Bossche D."/>
            <person name="Van Zand K."/>
            <person name="Backhovens H."/>
            <person name="van Regenmorter N."/>
            <person name="Martin J.-J."/>
            <person name="Van Broeckhoven C."/>
        </authorList>
    </citation>
    <scope>NUCLEOTIDE SEQUENCE [MRNA] (ISOFORM A)</scope>
    <scope>NUCLEOTIDE SEQUENCE [GENOMIC DNA] OF 1-131</scope>
    <scope>POLYMORPHISM</scope>
    <scope>VARIANTS ARG-264 AND MET-862</scope>
    <source>
        <tissue>Colon</tissue>
    </source>
</reference>
<reference key="3">
    <citation type="journal article" date="2004" name="Nat. Genet.">
        <title>Complete sequencing and characterization of 21,243 full-length human cDNAs.</title>
        <authorList>
            <person name="Ota T."/>
            <person name="Suzuki Y."/>
            <person name="Nishikawa T."/>
            <person name="Otsuki T."/>
            <person name="Sugiyama T."/>
            <person name="Irie R."/>
            <person name="Wakamatsu A."/>
            <person name="Hayashi K."/>
            <person name="Sato H."/>
            <person name="Nagai K."/>
            <person name="Kimura K."/>
            <person name="Makita H."/>
            <person name="Sekine M."/>
            <person name="Obayashi M."/>
            <person name="Nishi T."/>
            <person name="Shibahara T."/>
            <person name="Tanaka T."/>
            <person name="Ishii S."/>
            <person name="Yamamoto J."/>
            <person name="Saito K."/>
            <person name="Kawai Y."/>
            <person name="Isono Y."/>
            <person name="Nakamura Y."/>
            <person name="Nagahari K."/>
            <person name="Murakami K."/>
            <person name="Yasuda T."/>
            <person name="Iwayanagi T."/>
            <person name="Wagatsuma M."/>
            <person name="Shiratori A."/>
            <person name="Sudo H."/>
            <person name="Hosoiri T."/>
            <person name="Kaku Y."/>
            <person name="Kodaira H."/>
            <person name="Kondo H."/>
            <person name="Sugawara M."/>
            <person name="Takahashi M."/>
            <person name="Kanda K."/>
            <person name="Yokoi T."/>
            <person name="Furuya T."/>
            <person name="Kikkawa E."/>
            <person name="Omura Y."/>
            <person name="Abe K."/>
            <person name="Kamihara K."/>
            <person name="Katsuta N."/>
            <person name="Sato K."/>
            <person name="Tanikawa M."/>
            <person name="Yamazaki M."/>
            <person name="Ninomiya K."/>
            <person name="Ishibashi T."/>
            <person name="Yamashita H."/>
            <person name="Murakawa K."/>
            <person name="Fujimori K."/>
            <person name="Tanai H."/>
            <person name="Kimata M."/>
            <person name="Watanabe M."/>
            <person name="Hiraoka S."/>
            <person name="Chiba Y."/>
            <person name="Ishida S."/>
            <person name="Ono Y."/>
            <person name="Takiguchi S."/>
            <person name="Watanabe S."/>
            <person name="Yosida M."/>
            <person name="Hotuta T."/>
            <person name="Kusano J."/>
            <person name="Kanehori K."/>
            <person name="Takahashi-Fujii A."/>
            <person name="Hara H."/>
            <person name="Tanase T.-O."/>
            <person name="Nomura Y."/>
            <person name="Togiya S."/>
            <person name="Komai F."/>
            <person name="Hara R."/>
            <person name="Takeuchi K."/>
            <person name="Arita M."/>
            <person name="Imose N."/>
            <person name="Musashino K."/>
            <person name="Yuuki H."/>
            <person name="Oshima A."/>
            <person name="Sasaki N."/>
            <person name="Aotsuka S."/>
            <person name="Yoshikawa Y."/>
            <person name="Matsunawa H."/>
            <person name="Ichihara T."/>
            <person name="Shiohata N."/>
            <person name="Sano S."/>
            <person name="Moriya S."/>
            <person name="Momiyama H."/>
            <person name="Satoh N."/>
            <person name="Takami S."/>
            <person name="Terashima Y."/>
            <person name="Suzuki O."/>
            <person name="Nakagawa S."/>
            <person name="Senoh A."/>
            <person name="Mizoguchi H."/>
            <person name="Goto Y."/>
            <person name="Shimizu F."/>
            <person name="Wakebe H."/>
            <person name="Hishigaki H."/>
            <person name="Watanabe T."/>
            <person name="Sugiyama A."/>
            <person name="Takemoto M."/>
            <person name="Kawakami B."/>
            <person name="Yamazaki M."/>
            <person name="Watanabe K."/>
            <person name="Kumagai A."/>
            <person name="Itakura S."/>
            <person name="Fukuzumi Y."/>
            <person name="Fujimori Y."/>
            <person name="Komiyama M."/>
            <person name="Tashiro H."/>
            <person name="Tanigami A."/>
            <person name="Fujiwara T."/>
            <person name="Ono T."/>
            <person name="Yamada K."/>
            <person name="Fujii Y."/>
            <person name="Ozaki K."/>
            <person name="Hirao M."/>
            <person name="Ohmori Y."/>
            <person name="Kawabata A."/>
            <person name="Hikiji T."/>
            <person name="Kobatake N."/>
            <person name="Inagaki H."/>
            <person name="Ikema Y."/>
            <person name="Okamoto S."/>
            <person name="Okitani R."/>
            <person name="Kawakami T."/>
            <person name="Noguchi S."/>
            <person name="Itoh T."/>
            <person name="Shigeta K."/>
            <person name="Senba T."/>
            <person name="Matsumura K."/>
            <person name="Nakajima Y."/>
            <person name="Mizuno T."/>
            <person name="Morinaga M."/>
            <person name="Sasaki M."/>
            <person name="Togashi T."/>
            <person name="Oyama M."/>
            <person name="Hata H."/>
            <person name="Watanabe M."/>
            <person name="Komatsu T."/>
            <person name="Mizushima-Sugano J."/>
            <person name="Satoh T."/>
            <person name="Shirai Y."/>
            <person name="Takahashi Y."/>
            <person name="Nakagawa K."/>
            <person name="Okumura K."/>
            <person name="Nagase T."/>
            <person name="Nomura N."/>
            <person name="Kikuchi H."/>
            <person name="Masuho Y."/>
            <person name="Yamashita R."/>
            <person name="Nakai K."/>
            <person name="Yada T."/>
            <person name="Nakamura Y."/>
            <person name="Ohara O."/>
            <person name="Isogai T."/>
            <person name="Sugano S."/>
        </authorList>
    </citation>
    <scope>NUCLEOTIDE SEQUENCE [LARGE SCALE MRNA] (ISOFORM 3)</scope>
    <scope>VARIANTS ARG-264 AND MET-862</scope>
    <source>
        <tissue>Trachea</tissue>
    </source>
</reference>
<reference key="4">
    <citation type="journal article" date="2006" name="Nature">
        <title>The DNA sequence, annotation and analysis of human chromosome 3.</title>
        <authorList>
            <person name="Muzny D.M."/>
            <person name="Scherer S.E."/>
            <person name="Kaul R."/>
            <person name="Wang J."/>
            <person name="Yu J."/>
            <person name="Sudbrak R."/>
            <person name="Buhay C.J."/>
            <person name="Chen R."/>
            <person name="Cree A."/>
            <person name="Ding Y."/>
            <person name="Dugan-Rocha S."/>
            <person name="Gill R."/>
            <person name="Gunaratne P."/>
            <person name="Harris R.A."/>
            <person name="Hawes A.C."/>
            <person name="Hernandez J."/>
            <person name="Hodgson A.V."/>
            <person name="Hume J."/>
            <person name="Jackson A."/>
            <person name="Khan Z.M."/>
            <person name="Kovar-Smith C."/>
            <person name="Lewis L.R."/>
            <person name="Lozado R.J."/>
            <person name="Metzker M.L."/>
            <person name="Milosavljevic A."/>
            <person name="Miner G.R."/>
            <person name="Morgan M.B."/>
            <person name="Nazareth L.V."/>
            <person name="Scott G."/>
            <person name="Sodergren E."/>
            <person name="Song X.-Z."/>
            <person name="Steffen D."/>
            <person name="Wei S."/>
            <person name="Wheeler D.A."/>
            <person name="Wright M.W."/>
            <person name="Worley K.C."/>
            <person name="Yuan Y."/>
            <person name="Zhang Z."/>
            <person name="Adams C.Q."/>
            <person name="Ansari-Lari M.A."/>
            <person name="Ayele M."/>
            <person name="Brown M.J."/>
            <person name="Chen G."/>
            <person name="Chen Z."/>
            <person name="Clendenning J."/>
            <person name="Clerc-Blankenburg K.P."/>
            <person name="Chen R."/>
            <person name="Chen Z."/>
            <person name="Davis C."/>
            <person name="Delgado O."/>
            <person name="Dinh H.H."/>
            <person name="Dong W."/>
            <person name="Draper H."/>
            <person name="Ernst S."/>
            <person name="Fu G."/>
            <person name="Gonzalez-Garay M.L."/>
            <person name="Garcia D.K."/>
            <person name="Gillett W."/>
            <person name="Gu J."/>
            <person name="Hao B."/>
            <person name="Haugen E."/>
            <person name="Havlak P."/>
            <person name="He X."/>
            <person name="Hennig S."/>
            <person name="Hu S."/>
            <person name="Huang W."/>
            <person name="Jackson L.R."/>
            <person name="Jacob L.S."/>
            <person name="Kelly S.H."/>
            <person name="Kube M."/>
            <person name="Levy R."/>
            <person name="Li Z."/>
            <person name="Liu B."/>
            <person name="Liu J."/>
            <person name="Liu W."/>
            <person name="Lu J."/>
            <person name="Maheshwari M."/>
            <person name="Nguyen B.-V."/>
            <person name="Okwuonu G.O."/>
            <person name="Palmeiri A."/>
            <person name="Pasternak S."/>
            <person name="Perez L.M."/>
            <person name="Phelps K.A."/>
            <person name="Plopper F.J."/>
            <person name="Qiang B."/>
            <person name="Raymond C."/>
            <person name="Rodriguez R."/>
            <person name="Saenphimmachak C."/>
            <person name="Santibanez J."/>
            <person name="Shen H."/>
            <person name="Shen Y."/>
            <person name="Subramanian S."/>
            <person name="Tabor P.E."/>
            <person name="Verduzco D."/>
            <person name="Waldron L."/>
            <person name="Wang J."/>
            <person name="Wang J."/>
            <person name="Wang Q."/>
            <person name="Williams G.A."/>
            <person name="Wong G.K.-S."/>
            <person name="Yao Z."/>
            <person name="Zhang J."/>
            <person name="Zhang X."/>
            <person name="Zhao G."/>
            <person name="Zhou J."/>
            <person name="Zhou Y."/>
            <person name="Nelson D."/>
            <person name="Lehrach H."/>
            <person name="Reinhardt R."/>
            <person name="Naylor S.L."/>
            <person name="Yang H."/>
            <person name="Olson M."/>
            <person name="Weinstock G."/>
            <person name="Gibbs R.A."/>
        </authorList>
    </citation>
    <scope>NUCLEOTIDE SEQUENCE [LARGE SCALE GENOMIC DNA]</scope>
</reference>
<reference key="5">
    <citation type="journal article" date="2003" name="Arch. Neurol.">
        <title>A novel central nervous system-enriched spinocerebellar ataxia type 7 gene product.</title>
        <authorList>
            <person name="Einum D.D."/>
            <person name="Clark A.M."/>
            <person name="Townsend J.J."/>
            <person name="Ptacek L.J."/>
            <person name="Fu Y.H."/>
        </authorList>
    </citation>
    <scope>ALTERNATIVE SPLICING (ISOFORMS A AND B)</scope>
    <scope>SUBCELLULAR LOCATION</scope>
    <scope>TISSUE SPECIFICITY</scope>
    <source>
        <tissue>Testis</tissue>
    </source>
</reference>
<reference key="6">
    <citation type="journal article" date="1999" name="Hum. Mol. Genet.">
        <title>Nuclear localization of the spinocerebellar ataxia type 7 protein, ataxin-7.</title>
        <authorList>
            <person name="Kaytor M.D."/>
            <person name="Duvick L.A."/>
            <person name="Skinner P.J."/>
            <person name="Koob M.D."/>
            <person name="Ranum L.P."/>
            <person name="Orr H.T."/>
        </authorList>
    </citation>
    <scope>SUBCELLULAR LOCATION</scope>
</reference>
<reference key="7">
    <citation type="journal article" date="2001" name="Hum. Mol. Genet.">
        <title>Ataxin-7 interacts with a Cbl-associated protein that it recruits into neuronal intranuclear inclusions.</title>
        <authorList>
            <person name="Lebre A.-S."/>
            <person name="Jamot L."/>
            <person name="Takahashi J."/>
            <person name="Spassky N."/>
            <person name="Leprince C."/>
            <person name="Ravise N."/>
            <person name="Zander C."/>
            <person name="Fujigasaki H."/>
            <person name="Kussel-Andermann P."/>
            <person name="Duyckaerts C."/>
            <person name="Camonis J.H."/>
            <person name="Brice A."/>
        </authorList>
    </citation>
    <scope>INTERACTION WITH SORBS1</scope>
</reference>
<reference key="8">
    <citation type="journal article" date="2001" name="Hum. Mol. Genet.">
        <title>Association of ataxin-7 with the proteasome subunit S4 of the 19S regulatory complex.</title>
        <authorList>
            <person name="Matilla A."/>
            <person name="Gorbea C."/>
            <person name="Einum D.D."/>
            <person name="Townsend J."/>
            <person name="Michalik A."/>
            <person name="van Broeckhoven C."/>
            <person name="Jensen C.C."/>
            <person name="Murphy K.J."/>
            <person name="Ptacek L.J."/>
            <person name="Fu Y.H."/>
        </authorList>
    </citation>
    <scope>INTERACTION WITH PSMC1</scope>
</reference>
<reference key="9">
    <citation type="journal article" date="2004" name="Hum. Mol. Genet.">
        <title>Ataxin-7 is a subunit of GCN5 histone acetyltransferase-containing complexes.</title>
        <authorList>
            <person name="Helmlinger D."/>
            <person name="Hardy S."/>
            <person name="Sasorith S."/>
            <person name="Klein F."/>
            <person name="Robert F."/>
            <person name="Weber C."/>
            <person name="Miguet L."/>
            <person name="Potier N."/>
            <person name="Van-Dorsselaer A."/>
            <person name="Wurtz J.M."/>
            <person name="Mandel J.L."/>
            <person name="Tora L."/>
            <person name="Devys D."/>
        </authorList>
    </citation>
    <scope>INTERACTION WITH TRRAP; GCN5L2 AND TAF10</scope>
</reference>
<reference key="10">
    <citation type="journal article" date="2005" name="Proc. Natl. Acad. Sci. U.S.A.">
        <title>Polyglutamine-expanded ataxin-7 inhibits STAGA histone acetyltransferase activity to produce retinal degeneration.</title>
        <authorList>
            <person name="Palhan V.B."/>
            <person name="Chen S."/>
            <person name="Peng G.H."/>
            <person name="Tjernberg A."/>
            <person name="Gamper A.M."/>
            <person name="Fan Y."/>
            <person name="Chait B.T."/>
            <person name="La Spada A.R."/>
            <person name="Roeder R.G."/>
        </authorList>
    </citation>
    <scope>FUNCTION</scope>
    <scope>IDENTIFICATION IN THE STAGA COMPLEX</scope>
</reference>
<reference key="11">
    <citation type="journal article" date="2006" name="J. Biol. Chem.">
        <title>Ataxin-7 can export from the nucleus via a conserved exportin-dependent signal.</title>
        <authorList>
            <person name="Taylor J."/>
            <person name="Grote S.K."/>
            <person name="Xia J."/>
            <person name="Vandelft M."/>
            <person name="Graczyk J."/>
            <person name="Ellerby L.M."/>
            <person name="La Spada A.R."/>
            <person name="Truant R."/>
        </authorList>
    </citation>
    <scope>SUBCELLULAR LOCATION</scope>
</reference>
<reference key="12">
    <citation type="journal article" date="2007" name="J. Biol. Chem.">
        <title>Proteolytic cleavage of ataxin-7 by caspase-7 modulates cellular toxicity and transcriptional dysregulation.</title>
        <authorList>
            <person name="Young J.E."/>
            <person name="Gouw L."/>
            <person name="Propp S."/>
            <person name="Sopher B.L."/>
            <person name="Taylor J."/>
            <person name="Lin A."/>
            <person name="Hermel E."/>
            <person name="Logvinova A."/>
            <person name="Chen S.F."/>
            <person name="Chen S."/>
            <person name="Bredesen D.E."/>
            <person name="Truant R."/>
            <person name="Ptacek L.J."/>
            <person name="La Spada A.R."/>
            <person name="Ellerby L.M."/>
        </authorList>
    </citation>
    <scope>PROTEOLYTIC CLEAVAGE</scope>
    <scope>MUTAGENESIS OF ASP-266 AND ASP-344</scope>
</reference>
<reference key="13">
    <citation type="journal article" date="2008" name="Mol. Cell">
        <title>A TFTC/STAGA module mediates histone H2A and H2B deubiquitination, coactivates nuclear receptors, and counteracts heterochromatin silencing.</title>
        <authorList>
            <person name="Zhao Y."/>
            <person name="Lang G."/>
            <person name="Ito S."/>
            <person name="Bonnet J."/>
            <person name="Metzger E."/>
            <person name="Sawatsubashi S."/>
            <person name="Suzuki E."/>
            <person name="Le Guezennec X."/>
            <person name="Stunnenberg H.G."/>
            <person name="Krasnov A."/>
            <person name="Georgieva S.G."/>
            <person name="Schuele R."/>
            <person name="Takeyama K."/>
            <person name="Kato S."/>
            <person name="Tora L."/>
            <person name="Devys D."/>
        </authorList>
    </citation>
    <scope>FUNCTION</scope>
    <scope>IDENTIFICATION IN STAGA COMPLEX</scope>
</reference>
<reference key="14">
    <citation type="journal article" date="2010" name="Hum. Mol. Genet.">
        <title>SUMOylation attenuates the aggregation propensity and cellular toxicity of the polyglutamine expanded ataxin-7.</title>
        <authorList>
            <person name="Janer A."/>
            <person name="Werner A."/>
            <person name="Takahashi-Fujigasaki J."/>
            <person name="Daret A."/>
            <person name="Fujigasaki H."/>
            <person name="Takada K."/>
            <person name="Duyckaerts C."/>
            <person name="Brice A."/>
            <person name="Dejean A."/>
            <person name="Sittler A."/>
        </authorList>
    </citation>
    <scope>SUMOYLATION AT LYS-257</scope>
    <scope>MUTAGENESIS OF LYS-257 AND LYS-858</scope>
</reference>
<reference key="15">
    <citation type="journal article" date="2012" name="Hum. Mol. Genet.">
        <title>Ataxin-7 associates with microtubules and stabilizes the cytoskeletal network.</title>
        <authorList>
            <person name="Nakamura Y."/>
            <person name="Tagawa K."/>
            <person name="Oka T."/>
            <person name="Sasabe T."/>
            <person name="Ito H."/>
            <person name="Shiwaku H."/>
            <person name="La Spada A.R."/>
            <person name="Okazawa H."/>
        </authorList>
    </citation>
    <scope>FUNCTION</scope>
    <scope>INTERACTION WITH ALPHA TUBULIN</scope>
    <scope>SUBCELLULAR LOCATION</scope>
</reference>
<reference key="16">
    <citation type="journal article" date="2014" name="Genes Dev.">
        <title>Loss of Drosophila Ataxin-7, a SAGA subunit, reduces H2B ubiquitination and leads to neural and retinal degeneration.</title>
        <authorList>
            <person name="Mohan R.D."/>
            <person name="Dialynas G."/>
            <person name="Weake V.M."/>
            <person name="Liu J."/>
            <person name="Martin-Brown S."/>
            <person name="Florens L."/>
            <person name="Washburn M.P."/>
            <person name="Workman J.L."/>
            <person name="Abmayr S.M."/>
        </authorList>
    </citation>
    <scope>FUNCTION</scope>
</reference>
<reference key="17">
    <citation type="journal article" date="2017" name="Nat. Struct. Mol. Biol.">
        <title>Site-specific mapping of the human SUMO proteome reveals co-modification with phosphorylation.</title>
        <authorList>
            <person name="Hendriks I.A."/>
            <person name="Lyon D."/>
            <person name="Young C."/>
            <person name="Jensen L.J."/>
            <person name="Vertegaal A.C."/>
            <person name="Nielsen M.L."/>
        </authorList>
    </citation>
    <scope>SUMOYLATION [LARGE SCALE ANALYSIS] AT LYS-257</scope>
    <scope>IDENTIFICATION BY MASS SPECTROMETRY [LARGE SCALE ANALYSIS]</scope>
</reference>
<accession>O15265</accession>
<accession>B4E207</accession>
<accession>E9PHP9</accession>
<accession>O75328</accession>
<accession>O75329</accession>
<accession>Q9Y6P8</accession>
<name>ATX7_HUMAN</name>
<organism evidence="22">
    <name type="scientific">Homo sapiens</name>
    <name type="common">Human</name>
    <dbReference type="NCBI Taxonomy" id="9606"/>
    <lineage>
        <taxon>Eukaryota</taxon>
        <taxon>Metazoa</taxon>
        <taxon>Chordata</taxon>
        <taxon>Craniata</taxon>
        <taxon>Vertebrata</taxon>
        <taxon>Euteleostomi</taxon>
        <taxon>Mammalia</taxon>
        <taxon>Eutheria</taxon>
        <taxon>Euarchontoglires</taxon>
        <taxon>Primates</taxon>
        <taxon>Haplorrhini</taxon>
        <taxon>Catarrhini</taxon>
        <taxon>Hominidae</taxon>
        <taxon>Homo</taxon>
    </lineage>
</organism>
<keyword id="KW-0002">3D-structure</keyword>
<keyword id="KW-0025">Alternative splicing</keyword>
<keyword id="KW-0963">Cytoplasm</keyword>
<keyword id="KW-0206">Cytoskeleton</keyword>
<keyword id="KW-0225">Disease variant</keyword>
<keyword id="KW-1017">Isopeptide bond</keyword>
<keyword id="KW-0523">Neurodegeneration</keyword>
<keyword id="KW-0539">Nucleus</keyword>
<keyword id="KW-1267">Proteomics identification</keyword>
<keyword id="KW-1185">Reference proteome</keyword>
<keyword id="KW-0950">Spinocerebellar ataxia</keyword>
<keyword id="KW-0804">Transcription</keyword>
<keyword id="KW-0805">Transcription regulation</keyword>
<keyword id="KW-0818">Triplet repeat expansion</keyword>
<keyword id="KW-0832">Ubl conjugation</keyword>
<comment type="function">
    <text evidence="9 12 14 15 16">Acts as a component of the SAGA (aka STAGA) transcription coactivator-HAT complex (PubMed:15932940, PubMed:18206972). Mediates the interaction of SAGA complex with the CRX and is involved in CRX-dependent gene activation (PubMed:15932940, PubMed:18206972). Probably involved in tethering the deubiquitination module within the SAGA complex (PubMed:24493646). Necessary for microtubule cytoskeleton stabilization (PubMed:22100762). Involved in neurodegeneration (PubMed:9288099).</text>
</comment>
<comment type="subunit">
    <text evidence="4 5 8 9 12 14">Component of the SAGA transcription coactivator-HAT complex, at least composed of SUPT3H, GCN5L2, TAF5L, TAF6L, SUPT7L, TADA3L, TAD1L, TAF10, TAF12, TRRAP, TAF9 and ATXN7 (PubMed:15932940, PubMed:18206972). The STAGA core complex is associated with a subcomplex required for histone deubiquitination composed of ATXN7L3, ENY2 and USP22 (PubMed:15932940, PubMed:18206972). Interacts with SORBS1, PSMC1 and CRX (PubMed:11371513, PubMed:11734547). Interacts with TRRAP, GCN5L2 and TAF10 (PubMed:15115762). Interacts with alpha tubulin (PubMed:22100762).</text>
</comment>
<comment type="interaction">
    <interactant intactId="EBI-708350">
        <id>O15265</id>
    </interactant>
    <interactant intactId="EBI-947482">
        <id>O00468</id>
        <label>AGRN</label>
    </interactant>
    <organismsDiffer>false</organismsDiffer>
    <experiments>2</experiments>
</comment>
<comment type="interaction">
    <interactant intactId="EBI-708350">
        <id>O15265</id>
    </interactant>
    <interactant intactId="EBI-739498">
        <id>Q9P209</id>
        <label>CEP72</label>
    </interactant>
    <organismsDiffer>false</organismsDiffer>
    <experiments>2</experiments>
</comment>
<comment type="interaction">
    <interactant intactId="EBI-708350">
        <id>O15265</id>
    </interactant>
    <interactant intactId="EBI-947718">
        <id>Q8N2S1</id>
        <label>LTBP4</label>
    </interactant>
    <organismsDiffer>false</organismsDiffer>
    <experiments>2</experiments>
</comment>
<comment type="interaction">
    <interactant intactId="EBI-708350">
        <id>O15265</id>
    </interactant>
    <interactant intactId="EBI-949020">
        <id>O00339</id>
        <label>MATN2</label>
    </interactant>
    <organismsDiffer>false</organismsDiffer>
    <experiments>2</experiments>
</comment>
<comment type="interaction">
    <interactant intactId="EBI-708350">
        <id>O15265</id>
    </interactant>
    <interactant intactId="EBI-947597">
        <id>O75095</id>
        <label>MEGF6</label>
    </interactant>
    <organismsDiffer>false</organismsDiffer>
    <experiments>2</experiments>
</comment>
<comment type="interaction">
    <interactant intactId="EBI-708350">
        <id>O15265</id>
    </interactant>
    <interactant intactId="EBI-947617">
        <id>Q7Z7M0</id>
        <label>MEGF8</label>
    </interactant>
    <organismsDiffer>false</organismsDiffer>
    <experiments>2</experiments>
</comment>
<comment type="interaction">
    <interactant intactId="EBI-708350">
        <id>O15265</id>
    </interactant>
    <interactant intactId="EBI-751547">
        <id>Q9Y3T9</id>
        <label>NOC2L</label>
    </interactant>
    <organismsDiffer>false</organismsDiffer>
    <experiments>2</experiments>
</comment>
<comment type="interaction">
    <interactant intactId="EBI-708350">
        <id>O15265</id>
    </interactant>
    <interactant intactId="EBI-347978">
        <id>P37198</id>
        <label>NUP62</label>
    </interactant>
    <organismsDiffer>false</organismsDiffer>
    <experiments>2</experiments>
</comment>
<comment type="interaction">
    <interactant intactId="EBI-708350">
        <id>O15265</id>
    </interactant>
    <interactant intactId="EBI-747107">
        <id>Q8IUQ4</id>
        <label>SIAH1</label>
    </interactant>
    <organismsDiffer>false</organismsDiffer>
    <experiments>2</experiments>
</comment>
<comment type="interaction">
    <interactant intactId="EBI-708350">
        <id>O15265</id>
    </interactant>
    <interactant intactId="EBI-433642">
        <id>Q9BX66</id>
        <label>SORBS1</label>
    </interactant>
    <organismsDiffer>false</organismsDiffer>
    <experiments>15</experiments>
</comment>
<comment type="interaction">
    <interactant intactId="EBI-708350">
        <id>O15265</id>
    </interactant>
    <interactant intactId="EBI-708376">
        <id>Q12962</id>
        <label>TAF10</label>
    </interactant>
    <organismsDiffer>false</organismsDiffer>
    <experiments>7</experiments>
</comment>
<comment type="interaction">
    <interactant intactId="EBI-708350">
        <id>O15265</id>
    </interactant>
    <interactant intactId="EBI-399128">
        <id>Q9Y4A5</id>
        <label>TRRAP</label>
    </interactant>
    <organismsDiffer>false</organismsDiffer>
    <experiments>8</experiments>
</comment>
<comment type="interaction">
    <interactant intactId="EBI-708350">
        <id>O15265</id>
    </interactant>
    <interactant intactId="EBI-188137">
        <id>P02283</id>
        <label>His2B:CG33910</label>
    </interactant>
    <organismsDiffer>true</organismsDiffer>
    <experiments>2</experiments>
</comment>
<comment type="subcellular location">
    <molecule>Isoform a</molecule>
    <subcellularLocation>
        <location evidence="6 10 14">Nucleus</location>
    </subcellularLocation>
    <subcellularLocation>
        <location evidence="3">Nucleus</location>
        <location evidence="3">Nucleolus</location>
    </subcellularLocation>
    <subcellularLocation>
        <location evidence="3">Nucleus matrix</location>
    </subcellularLocation>
    <subcellularLocation>
        <location evidence="14">Cytoplasm</location>
        <location evidence="14">Cytoskeleton</location>
    </subcellularLocation>
    <text evidence="3 10">In addition to a diffuse distribution throughout the nucleus, it is associated with the nuclear matrix and the nucleolus (PubMed:10441328). It is able to shuttle between the nucleus and cytoplasm (PubMed:16314424).</text>
</comment>
<comment type="subcellular location">
    <molecule>Isoform b</molecule>
    <subcellularLocation>
        <location evidence="6">Cytoplasm</location>
    </subcellularLocation>
</comment>
<comment type="alternative products">
    <event type="alternative splicing"/>
    <isoform>
        <id>O15265-1</id>
        <name>a</name>
        <name>Ataxin-7a</name>
        <sequence type="displayed"/>
    </isoform>
    <isoform>
        <id>O15265-2</id>
        <name>b</name>
        <name>Ataxin-7b</name>
        <name>SCA7b</name>
        <sequence type="described" ref="VSP_007695"/>
    </isoform>
    <isoform>
        <id>O15265-3</id>
        <name>3</name>
        <sequence type="described" ref="VSP_044456"/>
    </isoform>
</comment>
<comment type="tissue specificity">
    <molecule>Isoform a</molecule>
    <text evidence="6">Isoform a is expressed in CNS, but is expressed predominantly in the peripherical tissues.</text>
</comment>
<comment type="tissue specificity">
    <molecule>Isoform b</molecule>
    <text evidence="6">Isoform b is expressed in CNS (PubMed:12533095). Also highly expressed in the frontal lobe, skeletal muscle and spinal cord and is expressed at a lower level in the lung, lymphoblast and intestine (PubMed:12533095).</text>
</comment>
<comment type="PTM">
    <text evidence="11">Proteolytically cleaved by caspase-7 (CASP7) (PubMed:17646170). The cleavage may be involved in SCA7 degeneration: the isoform fragments may exert distinct toxic influences that could contribute to selective neurodegeneration (PubMed:17646170).</text>
</comment>
<comment type="PTM">
    <text evidence="13">Sumoylation decreases the aggregation propensity and cellular toxicity of forms with an expanded poly-Gln region but has no effect on subcellular location or interaction with components of the STAGA complex.</text>
</comment>
<comment type="polymorphism">
    <text evidence="16 17">The poly-Gln region of ATXN7 is highly polymorphic (4 to 18 repeats) in the normal population and is expanded to about 38-130 repeats in SCA7 patients. Intermediate alleles with 28 to 35 repeats are prone to further expansion.</text>
</comment>
<comment type="disease" evidence="16">
    <disease id="DI-01071">
        <name>Spinocerebellar ataxia 7</name>
        <acronym>SCA7</acronym>
        <description>Spinocerebellar ataxia is a clinically and genetically heterogeneous group of cerebellar disorders. Patients show progressive incoordination of gait and often poor coordination of hands, speech and eye movements, due to degeneration of the cerebellum with variable involvement of the brainstem and spinal cord. SCA7 belongs to the autosomal dominant cerebellar ataxias type II (ADCA II) which are characterized by cerebellar ataxia with retinal degeneration and pigmentary macular dystrophy.</description>
        <dbReference type="MIM" id="164500"/>
    </disease>
    <text>The disease is caused by variants affecting the gene represented in this entry.</text>
</comment>
<comment type="similarity">
    <text evidence="21">Belongs to the ataxin-7 family.</text>
</comment>